<proteinExistence type="evidence at protein level"/>
<evidence type="ECO:0000269" key="1">
    <source>
    </source>
</evidence>
<evidence type="ECO:0000269" key="2">
    <source>
    </source>
</evidence>
<evidence type="ECO:0000269" key="3">
    <source>
    </source>
</evidence>
<evidence type="ECO:0000269" key="4">
    <source ref="5"/>
</evidence>
<evidence type="ECO:0000305" key="5"/>
<evidence type="ECO:0007829" key="6">
    <source>
        <dbReference type="PDB" id="6TNN"/>
    </source>
</evidence>
<evidence type="ECO:0007829" key="7">
    <source>
        <dbReference type="PDB" id="6TPQ"/>
    </source>
</evidence>
<evidence type="ECO:0007829" key="8">
    <source>
        <dbReference type="PDB" id="7AS8"/>
    </source>
</evidence>
<sequence>MSSAIETKKVVVEEIASKLKESKSTIIVDYRGLNVSEVTELRKQLREANVEFKVYKNTMTRRAVEQAELNGLNDFLTGPNAIAFSTEDVVAPAKVLNDFAKNHEALEIKAGVIEGKVSTVEEVKALAELPSREGLLSMLLSVLQAPVRNLALAAKAVAEQKEEQGA</sequence>
<keyword id="KW-0002">3D-structure</keyword>
<keyword id="KW-0903">Direct protein sequencing</keyword>
<keyword id="KW-1185">Reference proteome</keyword>
<keyword id="KW-0687">Ribonucleoprotein</keyword>
<keyword id="KW-0689">Ribosomal protein</keyword>
<keyword id="KW-0694">RNA-binding</keyword>
<keyword id="KW-0699">rRNA-binding</keyword>
<keyword id="KW-0346">Stress response</keyword>
<accession>P42923</accession>
<name>RL10_BACSU</name>
<protein>
    <recommendedName>
        <fullName evidence="5">Large ribosomal subunit protein uL10</fullName>
    </recommendedName>
    <alternativeName>
        <fullName>50S ribosomal protein L10</fullName>
    </alternativeName>
    <alternativeName>
        <fullName>BL5</fullName>
    </alternativeName>
    <alternativeName>
        <fullName>Cold acclimatization protein</fullName>
        <shortName>CAP</shortName>
    </alternativeName>
    <alternativeName>
        <fullName>Vegetative protein 300</fullName>
        <shortName>VEG300</shortName>
    </alternativeName>
</protein>
<gene>
    <name type="primary">rplJ</name>
    <name type="ordered locus">BSU01040</name>
</gene>
<comment type="function">
    <text evidence="5">Forms part of the ribosomal stalk, playing a central role in the interaction of the ribosome with GTP-bound translation factors (such as IF-2, EF-Tu, EF-G and RF3).</text>
</comment>
<comment type="subunit">
    <text evidence="1 2">Part of the ribosomal stalk of the 50S ribosomal subunit. The N-terminus interacts with L11 and 23S rRNA to form the base of the stalk. The C-terminus forms an elongated spine to which L12 dimers bind in a sequential fashion forming a pentameric L10(L12)2(L12)2 complex.</text>
</comment>
<comment type="induction">
    <text>In response to low temperature and salt stress.</text>
</comment>
<comment type="mass spectrometry">
    <text>Isolated L10(L12)4.</text>
</comment>
<comment type="mass spectrometry"/>
<comment type="mass spectrometry">
    <text>Isolated L10(L12)4.</text>
</comment>
<comment type="mass spectrometry"/>
<comment type="similarity">
    <text evidence="5">Belongs to the universal ribosomal protein uL10 family.</text>
</comment>
<dbReference type="EMBL" id="D50303">
    <property type="protein sequence ID" value="BAA08840.1"/>
    <property type="molecule type" value="Genomic_DNA"/>
</dbReference>
<dbReference type="EMBL" id="AL009126">
    <property type="protein sequence ID" value="CAB11880.2"/>
    <property type="molecule type" value="Genomic_DNA"/>
</dbReference>
<dbReference type="PIR" id="D69695">
    <property type="entry name" value="D69695"/>
</dbReference>
<dbReference type="RefSeq" id="NP_387985.2">
    <property type="nucleotide sequence ID" value="NC_000964.3"/>
</dbReference>
<dbReference type="RefSeq" id="WP_003235042.1">
    <property type="nucleotide sequence ID" value="NZ_OZ025638.1"/>
</dbReference>
<dbReference type="PDB" id="3J9W">
    <property type="method" value="EM"/>
    <property type="resolution" value="3.90 A"/>
    <property type="chains" value="BJ=1-166"/>
</dbReference>
<dbReference type="PDB" id="5NJT">
    <property type="method" value="EM"/>
    <property type="resolution" value="3.80 A"/>
    <property type="chains" value="b=4-126"/>
</dbReference>
<dbReference type="PDB" id="6TNN">
    <property type="method" value="EM"/>
    <property type="resolution" value="3.07 A"/>
    <property type="chains" value="b=1-166"/>
</dbReference>
<dbReference type="PDB" id="6TPQ">
    <property type="method" value="EM"/>
    <property type="resolution" value="3.07 A"/>
    <property type="chains" value="b=1-166"/>
</dbReference>
<dbReference type="PDB" id="7AS8">
    <property type="method" value="EM"/>
    <property type="resolution" value="2.90 A"/>
    <property type="chains" value="L=1-166"/>
</dbReference>
<dbReference type="PDB" id="7AS9">
    <property type="method" value="EM"/>
    <property type="resolution" value="3.50 A"/>
    <property type="chains" value="L=1-166"/>
</dbReference>
<dbReference type="PDB" id="7O5B">
    <property type="method" value="EM"/>
    <property type="resolution" value="3.33 A"/>
    <property type="chains" value="p=1-166"/>
</dbReference>
<dbReference type="PDB" id="7OPE">
    <property type="method" value="EM"/>
    <property type="resolution" value="3.20 A"/>
    <property type="chains" value="L=1-166"/>
</dbReference>
<dbReference type="PDB" id="7QGU">
    <property type="method" value="EM"/>
    <property type="resolution" value="4.75 A"/>
    <property type="chains" value="H=1-166"/>
</dbReference>
<dbReference type="PDB" id="7QH4">
    <property type="method" value="EM"/>
    <property type="resolution" value="5.45 A"/>
    <property type="chains" value="H=1-166"/>
</dbReference>
<dbReference type="PDBsum" id="3J9W"/>
<dbReference type="PDBsum" id="5NJT"/>
<dbReference type="PDBsum" id="6TNN"/>
<dbReference type="PDBsum" id="6TPQ"/>
<dbReference type="PDBsum" id="7AS8"/>
<dbReference type="PDBsum" id="7AS9"/>
<dbReference type="PDBsum" id="7O5B"/>
<dbReference type="PDBsum" id="7OPE"/>
<dbReference type="PDBsum" id="7QGU"/>
<dbReference type="PDBsum" id="7QH4"/>
<dbReference type="EMDB" id="EMD-10535"/>
<dbReference type="EMDB" id="EMD-10543"/>
<dbReference type="EMDB" id="EMD-11889"/>
<dbReference type="EMDB" id="EMD-11890"/>
<dbReference type="EMDB" id="EMD-12734"/>
<dbReference type="EMDB" id="EMD-13017"/>
<dbReference type="EMDB" id="EMD-3656"/>
<dbReference type="SMR" id="P42923"/>
<dbReference type="FunCoup" id="P42923">
    <property type="interactions" value="601"/>
</dbReference>
<dbReference type="IntAct" id="P42923">
    <property type="interactions" value="2"/>
</dbReference>
<dbReference type="MINT" id="P42923"/>
<dbReference type="STRING" id="224308.BSU01040"/>
<dbReference type="jPOST" id="P42923"/>
<dbReference type="PaxDb" id="224308-BSU01040"/>
<dbReference type="EnsemblBacteria" id="CAB11880">
    <property type="protein sequence ID" value="CAB11880"/>
    <property type="gene ID" value="BSU_01040"/>
</dbReference>
<dbReference type="GeneID" id="936153"/>
<dbReference type="KEGG" id="bsu:BSU01040"/>
<dbReference type="PATRIC" id="fig|224308.179.peg.107"/>
<dbReference type="eggNOG" id="COG0244">
    <property type="taxonomic scope" value="Bacteria"/>
</dbReference>
<dbReference type="InParanoid" id="P42923"/>
<dbReference type="OrthoDB" id="9808307at2"/>
<dbReference type="PhylomeDB" id="P42923"/>
<dbReference type="BioCyc" id="BSUB:BSU01040-MONOMER"/>
<dbReference type="Proteomes" id="UP000001570">
    <property type="component" value="Chromosome"/>
</dbReference>
<dbReference type="GO" id="GO:0022625">
    <property type="term" value="C:cytosolic large ribosomal subunit"/>
    <property type="evidence" value="ECO:0000318"/>
    <property type="project" value="GO_Central"/>
</dbReference>
<dbReference type="GO" id="GO:0070180">
    <property type="term" value="F:large ribosomal subunit rRNA binding"/>
    <property type="evidence" value="ECO:0007669"/>
    <property type="project" value="UniProtKB-UniRule"/>
</dbReference>
<dbReference type="GO" id="GO:0003735">
    <property type="term" value="F:structural constituent of ribosome"/>
    <property type="evidence" value="ECO:0000318"/>
    <property type="project" value="GO_Central"/>
</dbReference>
<dbReference type="GO" id="GO:0006412">
    <property type="term" value="P:translation"/>
    <property type="evidence" value="ECO:0000318"/>
    <property type="project" value="GO_Central"/>
</dbReference>
<dbReference type="CDD" id="cd05797">
    <property type="entry name" value="Ribosomal_L10"/>
    <property type="match status" value="1"/>
</dbReference>
<dbReference type="FunFam" id="3.30.70.1730:FF:000001">
    <property type="entry name" value="50S ribosomal protein L10"/>
    <property type="match status" value="1"/>
</dbReference>
<dbReference type="Gene3D" id="3.30.70.1730">
    <property type="match status" value="1"/>
</dbReference>
<dbReference type="HAMAP" id="MF_00362">
    <property type="entry name" value="Ribosomal_uL10"/>
    <property type="match status" value="1"/>
</dbReference>
<dbReference type="InterPro" id="IPR001790">
    <property type="entry name" value="Ribosomal_uL10"/>
</dbReference>
<dbReference type="InterPro" id="IPR043141">
    <property type="entry name" value="Ribosomal_uL10-like_sf"/>
</dbReference>
<dbReference type="InterPro" id="IPR022973">
    <property type="entry name" value="Ribosomal_uL10_bac"/>
</dbReference>
<dbReference type="InterPro" id="IPR047865">
    <property type="entry name" value="Ribosomal_uL10_bac_type"/>
</dbReference>
<dbReference type="InterPro" id="IPR002363">
    <property type="entry name" value="Ribosomal_uL10_CS_bac"/>
</dbReference>
<dbReference type="NCBIfam" id="NF000955">
    <property type="entry name" value="PRK00099.1-1"/>
    <property type="match status" value="1"/>
</dbReference>
<dbReference type="PANTHER" id="PTHR11560">
    <property type="entry name" value="39S RIBOSOMAL PROTEIN L10, MITOCHONDRIAL"/>
    <property type="match status" value="1"/>
</dbReference>
<dbReference type="Pfam" id="PF00466">
    <property type="entry name" value="Ribosomal_L10"/>
    <property type="match status" value="1"/>
</dbReference>
<dbReference type="SUPFAM" id="SSF160369">
    <property type="entry name" value="Ribosomal protein L10-like"/>
    <property type="match status" value="1"/>
</dbReference>
<dbReference type="PROSITE" id="PS01109">
    <property type="entry name" value="RIBOSOMAL_L10"/>
    <property type="match status" value="1"/>
</dbReference>
<organism>
    <name type="scientific">Bacillus subtilis (strain 168)</name>
    <dbReference type="NCBI Taxonomy" id="224308"/>
    <lineage>
        <taxon>Bacteria</taxon>
        <taxon>Bacillati</taxon>
        <taxon>Bacillota</taxon>
        <taxon>Bacilli</taxon>
        <taxon>Bacillales</taxon>
        <taxon>Bacillaceae</taxon>
        <taxon>Bacillus</taxon>
    </lineage>
</organism>
<reference key="1">
    <citation type="journal article" date="1996" name="Microbiology">
        <title>Sequence analysis of a 50 kb region between spo0H and rrnH on the Bacillus subtilis chromosome.</title>
        <authorList>
            <person name="Yasumoto K."/>
            <person name="Liu H."/>
            <person name="Jeong S.M."/>
            <person name="Ohashi Y."/>
            <person name="Kakinuma S."/>
            <person name="Tanaka K."/>
            <person name="Kawamura F."/>
            <person name="Yoshikawa H."/>
            <person name="Takahashi H."/>
        </authorList>
    </citation>
    <scope>NUCLEOTIDE SEQUENCE [GENOMIC DNA]</scope>
    <source>
        <strain>168</strain>
    </source>
</reference>
<reference key="2">
    <citation type="journal article" date="1997" name="Nature">
        <title>The complete genome sequence of the Gram-positive bacterium Bacillus subtilis.</title>
        <authorList>
            <person name="Kunst F."/>
            <person name="Ogasawara N."/>
            <person name="Moszer I."/>
            <person name="Albertini A.M."/>
            <person name="Alloni G."/>
            <person name="Azevedo V."/>
            <person name="Bertero M.G."/>
            <person name="Bessieres P."/>
            <person name="Bolotin A."/>
            <person name="Borchert S."/>
            <person name="Borriss R."/>
            <person name="Boursier L."/>
            <person name="Brans A."/>
            <person name="Braun M."/>
            <person name="Brignell S.C."/>
            <person name="Bron S."/>
            <person name="Brouillet S."/>
            <person name="Bruschi C.V."/>
            <person name="Caldwell B."/>
            <person name="Capuano V."/>
            <person name="Carter N.M."/>
            <person name="Choi S.-K."/>
            <person name="Codani J.-J."/>
            <person name="Connerton I.F."/>
            <person name="Cummings N.J."/>
            <person name="Daniel R.A."/>
            <person name="Denizot F."/>
            <person name="Devine K.M."/>
            <person name="Duesterhoeft A."/>
            <person name="Ehrlich S.D."/>
            <person name="Emmerson P.T."/>
            <person name="Entian K.-D."/>
            <person name="Errington J."/>
            <person name="Fabret C."/>
            <person name="Ferrari E."/>
            <person name="Foulger D."/>
            <person name="Fritz C."/>
            <person name="Fujita M."/>
            <person name="Fujita Y."/>
            <person name="Fuma S."/>
            <person name="Galizzi A."/>
            <person name="Galleron N."/>
            <person name="Ghim S.-Y."/>
            <person name="Glaser P."/>
            <person name="Goffeau A."/>
            <person name="Golightly E.J."/>
            <person name="Grandi G."/>
            <person name="Guiseppi G."/>
            <person name="Guy B.J."/>
            <person name="Haga K."/>
            <person name="Haiech J."/>
            <person name="Harwood C.R."/>
            <person name="Henaut A."/>
            <person name="Hilbert H."/>
            <person name="Holsappel S."/>
            <person name="Hosono S."/>
            <person name="Hullo M.-F."/>
            <person name="Itaya M."/>
            <person name="Jones L.-M."/>
            <person name="Joris B."/>
            <person name="Karamata D."/>
            <person name="Kasahara Y."/>
            <person name="Klaerr-Blanchard M."/>
            <person name="Klein C."/>
            <person name="Kobayashi Y."/>
            <person name="Koetter P."/>
            <person name="Koningstein G."/>
            <person name="Krogh S."/>
            <person name="Kumano M."/>
            <person name="Kurita K."/>
            <person name="Lapidus A."/>
            <person name="Lardinois S."/>
            <person name="Lauber J."/>
            <person name="Lazarevic V."/>
            <person name="Lee S.-M."/>
            <person name="Levine A."/>
            <person name="Liu H."/>
            <person name="Masuda S."/>
            <person name="Mauel C."/>
            <person name="Medigue C."/>
            <person name="Medina N."/>
            <person name="Mellado R.P."/>
            <person name="Mizuno M."/>
            <person name="Moestl D."/>
            <person name="Nakai S."/>
            <person name="Noback M."/>
            <person name="Noone D."/>
            <person name="O'Reilly M."/>
            <person name="Ogawa K."/>
            <person name="Ogiwara A."/>
            <person name="Oudega B."/>
            <person name="Park S.-H."/>
            <person name="Parro V."/>
            <person name="Pohl T.M."/>
            <person name="Portetelle D."/>
            <person name="Porwollik S."/>
            <person name="Prescott A.M."/>
            <person name="Presecan E."/>
            <person name="Pujic P."/>
            <person name="Purnelle B."/>
            <person name="Rapoport G."/>
            <person name="Rey M."/>
            <person name="Reynolds S."/>
            <person name="Rieger M."/>
            <person name="Rivolta C."/>
            <person name="Rocha E."/>
            <person name="Roche B."/>
            <person name="Rose M."/>
            <person name="Sadaie Y."/>
            <person name="Sato T."/>
            <person name="Scanlan E."/>
            <person name="Schleich S."/>
            <person name="Schroeter R."/>
            <person name="Scoffone F."/>
            <person name="Sekiguchi J."/>
            <person name="Sekowska A."/>
            <person name="Seror S.J."/>
            <person name="Serror P."/>
            <person name="Shin B.-S."/>
            <person name="Soldo B."/>
            <person name="Sorokin A."/>
            <person name="Tacconi E."/>
            <person name="Takagi T."/>
            <person name="Takahashi H."/>
            <person name="Takemaru K."/>
            <person name="Takeuchi M."/>
            <person name="Tamakoshi A."/>
            <person name="Tanaka T."/>
            <person name="Terpstra P."/>
            <person name="Tognoni A."/>
            <person name="Tosato V."/>
            <person name="Uchiyama S."/>
            <person name="Vandenbol M."/>
            <person name="Vannier F."/>
            <person name="Vassarotti A."/>
            <person name="Viari A."/>
            <person name="Wambutt R."/>
            <person name="Wedler E."/>
            <person name="Wedler H."/>
            <person name="Weitzenegger T."/>
            <person name="Winters P."/>
            <person name="Wipat A."/>
            <person name="Yamamoto H."/>
            <person name="Yamane K."/>
            <person name="Yasumoto K."/>
            <person name="Yata K."/>
            <person name="Yoshida K."/>
            <person name="Yoshikawa H.-F."/>
            <person name="Zumstein E."/>
            <person name="Yoshikawa H."/>
            <person name="Danchin A."/>
        </authorList>
    </citation>
    <scope>NUCLEOTIDE SEQUENCE [LARGE SCALE GENOMIC DNA]</scope>
    <source>
        <strain>168</strain>
    </source>
</reference>
<reference key="3">
    <citation type="journal article" date="2009" name="Microbiology">
        <title>From a consortium sequence to a unified sequence: the Bacillus subtilis 168 reference genome a decade later.</title>
        <authorList>
            <person name="Barbe V."/>
            <person name="Cruveiller S."/>
            <person name="Kunst F."/>
            <person name="Lenoble P."/>
            <person name="Meurice G."/>
            <person name="Sekowska A."/>
            <person name="Vallenet D."/>
            <person name="Wang T."/>
            <person name="Moszer I."/>
            <person name="Medigue C."/>
            <person name="Danchin A."/>
        </authorList>
    </citation>
    <scope>SEQUENCE REVISION TO 52; 131 AND 144</scope>
</reference>
<reference key="4">
    <citation type="journal article" date="1997" name="Electrophoresis">
        <title>First steps from a two-dimensional protein index towards a response-regulation map for Bacillus subtilis.</title>
        <authorList>
            <person name="Antelmann H."/>
            <person name="Bernhardt J."/>
            <person name="Schmid R."/>
            <person name="Mach H."/>
            <person name="Voelker U."/>
            <person name="Hecker M."/>
        </authorList>
    </citation>
    <scope>PROTEIN SEQUENCE OF 2-12</scope>
    <source>
        <strain>168 / IS58</strain>
    </source>
</reference>
<reference key="5">
    <citation type="submission" date="1997-10" db="UniProtKB">
        <authorList>
            <person name="Graumann P.L."/>
            <person name="Schmid R."/>
            <person name="Marahiel M.A."/>
        </authorList>
    </citation>
    <scope>PROTEIN SEQUENCE OF 2-12</scope>
    <source>
        <strain>168 / JH642</strain>
    </source>
</reference>
<reference key="6">
    <citation type="journal article" date="2005" name="Proc. Natl. Acad. Sci. U.S.A.">
        <title>Heptameric (L12)6/L10 rather than canonical pentameric complexes are found by tandem MS of intact ribosomes from thermophilic bacteria.</title>
        <authorList>
            <person name="Ilag L.L."/>
            <person name="Videler H."/>
            <person name="McKay A.R."/>
            <person name="Sobott F."/>
            <person name="Fucini P."/>
            <person name="Nierhaus K.H."/>
            <person name="Robinson C.V."/>
        </authorList>
    </citation>
    <scope>SUBUNIT</scope>
    <scope>STOICHIOMETRY</scope>
    <scope>MASS SPECTROMETRY</scope>
</reference>
<reference key="7">
    <citation type="journal article" date="2010" name="Mol. Cell. Proteomics">
        <title>Mass spectrometry defines the stoichiometry of ribosomal stalk complexes across the phylogenetic tree.</title>
        <authorList>
            <person name="Gordiyenko Y."/>
            <person name="Videler H."/>
            <person name="Zhou M."/>
            <person name="McKay A.R."/>
            <person name="Fucini P."/>
            <person name="Biegel E."/>
            <person name="Muller V."/>
            <person name="Robinson C.V."/>
        </authorList>
    </citation>
    <scope>SUBUNIT</scope>
    <scope>STOICHIOMETRY</scope>
    <scope>MASS SPECTROMETRY</scope>
</reference>
<feature type="initiator methionine" description="Removed" evidence="3 4">
    <location>
        <position position="1"/>
    </location>
</feature>
<feature type="chain" id="PRO_0000154588" description="Large ribosomal subunit protein uL10">
    <location>
        <begin position="2"/>
        <end position="166"/>
    </location>
</feature>
<feature type="sequence conflict" description="In Ref. 1; BAA08840." evidence="5" ref="1">
    <original>F</original>
    <variation>S</variation>
    <location>
        <position position="52"/>
    </location>
</feature>
<feature type="sequence conflict" description="In Ref. 1; BAA08840." evidence="5" ref="1">
    <original>S</original>
    <variation>P</variation>
    <location>
        <position position="131"/>
    </location>
</feature>
<feature type="sequence conflict" description="In Ref. 1; BAA08840." evidence="5" ref="1">
    <original>Q</original>
    <variation>K</variation>
    <location>
        <position position="144"/>
    </location>
</feature>
<feature type="helix" evidence="8">
    <location>
        <begin position="6"/>
        <end position="21"/>
    </location>
</feature>
<feature type="strand" evidence="8">
    <location>
        <begin position="23"/>
        <end position="28"/>
    </location>
</feature>
<feature type="strand" evidence="6">
    <location>
        <begin position="29"/>
        <end position="31"/>
    </location>
</feature>
<feature type="helix" evidence="8">
    <location>
        <begin position="35"/>
        <end position="48"/>
    </location>
</feature>
<feature type="strand" evidence="8">
    <location>
        <begin position="51"/>
        <end position="54"/>
    </location>
</feature>
<feature type="helix" evidence="8">
    <location>
        <begin position="57"/>
        <end position="64"/>
    </location>
</feature>
<feature type="strand" evidence="6">
    <location>
        <begin position="67"/>
        <end position="70"/>
    </location>
</feature>
<feature type="helix" evidence="8">
    <location>
        <begin position="74"/>
        <end position="76"/>
    </location>
</feature>
<feature type="strand" evidence="8">
    <location>
        <begin position="77"/>
        <end position="79"/>
    </location>
</feature>
<feature type="strand" evidence="8">
    <location>
        <begin position="81"/>
        <end position="85"/>
    </location>
</feature>
<feature type="strand" evidence="7">
    <location>
        <begin position="89"/>
        <end position="92"/>
    </location>
</feature>
<feature type="helix" evidence="8">
    <location>
        <begin position="93"/>
        <end position="103"/>
    </location>
</feature>
<feature type="strand" evidence="6">
    <location>
        <begin position="104"/>
        <end position="108"/>
    </location>
</feature>
<feature type="strand" evidence="8">
    <location>
        <begin position="110"/>
        <end position="113"/>
    </location>
</feature>
<feature type="strand" evidence="8">
    <location>
        <begin position="116"/>
        <end position="118"/>
    </location>
</feature>
<feature type="helix" evidence="8">
    <location>
        <begin position="120"/>
        <end position="127"/>
    </location>
</feature>